<evidence type="ECO:0000255" key="1">
    <source>
        <dbReference type="HAMAP-Rule" id="MF_00114"/>
    </source>
</evidence>
<keyword id="KW-0963">Cytoplasm</keyword>
<keyword id="KW-0456">Lyase</keyword>
<keyword id="KW-0704">Schiff base</keyword>
<name>DEOC_STRA1</name>
<accession>Q3JYQ4</accession>
<organism>
    <name type="scientific">Streptococcus agalactiae serotype Ia (strain ATCC 27591 / A909 / CDC SS700)</name>
    <dbReference type="NCBI Taxonomy" id="205921"/>
    <lineage>
        <taxon>Bacteria</taxon>
        <taxon>Bacillati</taxon>
        <taxon>Bacillota</taxon>
        <taxon>Bacilli</taxon>
        <taxon>Lactobacillales</taxon>
        <taxon>Streptococcaceae</taxon>
        <taxon>Streptococcus</taxon>
    </lineage>
</organism>
<gene>
    <name evidence="1" type="primary">deoC</name>
    <name type="ordered locus">SAK_2009</name>
</gene>
<protein>
    <recommendedName>
        <fullName evidence="1">Deoxyribose-phosphate aldolase</fullName>
        <shortName evidence="1">DERA</shortName>
        <ecNumber evidence="1">4.1.2.4</ecNumber>
    </recommendedName>
    <alternativeName>
        <fullName evidence="1">2-deoxy-D-ribose 5-phosphate aldolase</fullName>
    </alternativeName>
    <alternativeName>
        <fullName evidence="1">Phosphodeoxyriboaldolase</fullName>
        <shortName evidence="1">Deoxyriboaldolase</shortName>
    </alternativeName>
</protein>
<feature type="chain" id="PRO_0000231567" description="Deoxyribose-phosphate aldolase">
    <location>
        <begin position="1"/>
        <end position="223"/>
    </location>
</feature>
<feature type="active site" description="Proton donor/acceptor" evidence="1">
    <location>
        <position position="91"/>
    </location>
</feature>
<feature type="active site" description="Schiff-base intermediate with acetaldehyde" evidence="1">
    <location>
        <position position="153"/>
    </location>
</feature>
<feature type="active site" description="Proton donor/acceptor" evidence="1">
    <location>
        <position position="182"/>
    </location>
</feature>
<comment type="function">
    <text evidence="1">Catalyzes a reversible aldol reaction between acetaldehyde and D-glyceraldehyde 3-phosphate to generate 2-deoxy-D-ribose 5-phosphate.</text>
</comment>
<comment type="catalytic activity">
    <reaction evidence="1">
        <text>2-deoxy-D-ribose 5-phosphate = D-glyceraldehyde 3-phosphate + acetaldehyde</text>
        <dbReference type="Rhea" id="RHEA:12821"/>
        <dbReference type="ChEBI" id="CHEBI:15343"/>
        <dbReference type="ChEBI" id="CHEBI:59776"/>
        <dbReference type="ChEBI" id="CHEBI:62877"/>
        <dbReference type="EC" id="4.1.2.4"/>
    </reaction>
</comment>
<comment type="pathway">
    <text evidence="1">Carbohydrate degradation; 2-deoxy-D-ribose 1-phosphate degradation; D-glyceraldehyde 3-phosphate and acetaldehyde from 2-deoxy-alpha-D-ribose 1-phosphate: step 2/2.</text>
</comment>
<comment type="subcellular location">
    <subcellularLocation>
        <location evidence="1">Cytoplasm</location>
    </subcellularLocation>
</comment>
<comment type="similarity">
    <text evidence="1">Belongs to the DeoC/FbaB aldolase family. DeoC type 1 subfamily.</text>
</comment>
<dbReference type="EC" id="4.1.2.4" evidence="1"/>
<dbReference type="EMBL" id="CP000114">
    <property type="protein sequence ID" value="ABA44945.1"/>
    <property type="molecule type" value="Genomic_DNA"/>
</dbReference>
<dbReference type="RefSeq" id="WP_000453154.1">
    <property type="nucleotide sequence ID" value="NC_007432.1"/>
</dbReference>
<dbReference type="SMR" id="Q3JYQ4"/>
<dbReference type="KEGG" id="sak:SAK_2009"/>
<dbReference type="HOGENOM" id="CLU_053595_0_2_9"/>
<dbReference type="UniPathway" id="UPA00002">
    <property type="reaction ID" value="UER00468"/>
</dbReference>
<dbReference type="GO" id="GO:0005737">
    <property type="term" value="C:cytoplasm"/>
    <property type="evidence" value="ECO:0007669"/>
    <property type="project" value="UniProtKB-SubCell"/>
</dbReference>
<dbReference type="GO" id="GO:0004139">
    <property type="term" value="F:deoxyribose-phosphate aldolase activity"/>
    <property type="evidence" value="ECO:0007669"/>
    <property type="project" value="UniProtKB-UniRule"/>
</dbReference>
<dbReference type="GO" id="GO:0006018">
    <property type="term" value="P:2-deoxyribose 1-phosphate catabolic process"/>
    <property type="evidence" value="ECO:0007669"/>
    <property type="project" value="UniProtKB-UniRule"/>
</dbReference>
<dbReference type="GO" id="GO:0016052">
    <property type="term" value="P:carbohydrate catabolic process"/>
    <property type="evidence" value="ECO:0007669"/>
    <property type="project" value="TreeGrafter"/>
</dbReference>
<dbReference type="GO" id="GO:0009264">
    <property type="term" value="P:deoxyribonucleotide catabolic process"/>
    <property type="evidence" value="ECO:0007669"/>
    <property type="project" value="InterPro"/>
</dbReference>
<dbReference type="CDD" id="cd00959">
    <property type="entry name" value="DeoC"/>
    <property type="match status" value="1"/>
</dbReference>
<dbReference type="FunFam" id="3.20.20.70:FF:000044">
    <property type="entry name" value="Deoxyribose-phosphate aldolase"/>
    <property type="match status" value="1"/>
</dbReference>
<dbReference type="Gene3D" id="3.20.20.70">
    <property type="entry name" value="Aldolase class I"/>
    <property type="match status" value="1"/>
</dbReference>
<dbReference type="HAMAP" id="MF_00114">
    <property type="entry name" value="DeoC_type1"/>
    <property type="match status" value="1"/>
</dbReference>
<dbReference type="InterPro" id="IPR013785">
    <property type="entry name" value="Aldolase_TIM"/>
</dbReference>
<dbReference type="InterPro" id="IPR011343">
    <property type="entry name" value="DeoC"/>
</dbReference>
<dbReference type="InterPro" id="IPR002915">
    <property type="entry name" value="DeoC/FbaB/LacD_aldolase"/>
</dbReference>
<dbReference type="InterPro" id="IPR028581">
    <property type="entry name" value="DeoC_typeI"/>
</dbReference>
<dbReference type="NCBIfam" id="TIGR00126">
    <property type="entry name" value="deoC"/>
    <property type="match status" value="1"/>
</dbReference>
<dbReference type="PANTHER" id="PTHR10889">
    <property type="entry name" value="DEOXYRIBOSE-PHOSPHATE ALDOLASE"/>
    <property type="match status" value="1"/>
</dbReference>
<dbReference type="PANTHER" id="PTHR10889:SF1">
    <property type="entry name" value="DEOXYRIBOSE-PHOSPHATE ALDOLASE"/>
    <property type="match status" value="1"/>
</dbReference>
<dbReference type="Pfam" id="PF01791">
    <property type="entry name" value="DeoC"/>
    <property type="match status" value="1"/>
</dbReference>
<dbReference type="PIRSF" id="PIRSF001357">
    <property type="entry name" value="DeoC"/>
    <property type="match status" value="1"/>
</dbReference>
<dbReference type="SMART" id="SM01133">
    <property type="entry name" value="DeoC"/>
    <property type="match status" value="1"/>
</dbReference>
<dbReference type="SUPFAM" id="SSF51569">
    <property type="entry name" value="Aldolase"/>
    <property type="match status" value="1"/>
</dbReference>
<reference key="1">
    <citation type="journal article" date="2005" name="Proc. Natl. Acad. Sci. U.S.A.">
        <title>Genome analysis of multiple pathogenic isolates of Streptococcus agalactiae: implications for the microbial 'pan-genome'.</title>
        <authorList>
            <person name="Tettelin H."/>
            <person name="Masignani V."/>
            <person name="Cieslewicz M.J."/>
            <person name="Donati C."/>
            <person name="Medini D."/>
            <person name="Ward N.L."/>
            <person name="Angiuoli S.V."/>
            <person name="Crabtree J."/>
            <person name="Jones A.L."/>
            <person name="Durkin A.S."/>
            <person name="DeBoy R.T."/>
            <person name="Davidsen T.M."/>
            <person name="Mora M."/>
            <person name="Scarselli M."/>
            <person name="Margarit y Ros I."/>
            <person name="Peterson J.D."/>
            <person name="Hauser C.R."/>
            <person name="Sundaram J.P."/>
            <person name="Nelson W.C."/>
            <person name="Madupu R."/>
            <person name="Brinkac L.M."/>
            <person name="Dodson R.J."/>
            <person name="Rosovitz M.J."/>
            <person name="Sullivan S.A."/>
            <person name="Daugherty S.C."/>
            <person name="Haft D.H."/>
            <person name="Selengut J."/>
            <person name="Gwinn M.L."/>
            <person name="Zhou L."/>
            <person name="Zafar N."/>
            <person name="Khouri H."/>
            <person name="Radune D."/>
            <person name="Dimitrov G."/>
            <person name="Watkins K."/>
            <person name="O'Connor K.J."/>
            <person name="Smith S."/>
            <person name="Utterback T.R."/>
            <person name="White O."/>
            <person name="Rubens C.E."/>
            <person name="Grandi G."/>
            <person name="Madoff L.C."/>
            <person name="Kasper D.L."/>
            <person name="Telford J.L."/>
            <person name="Wessels M.R."/>
            <person name="Rappuoli R."/>
            <person name="Fraser C.M."/>
        </authorList>
    </citation>
    <scope>NUCLEOTIDE SEQUENCE [LARGE SCALE GENOMIC DNA]</scope>
    <source>
        <strain>ATCC 27591 / A909 / CDC SS700</strain>
    </source>
</reference>
<proteinExistence type="inferred from homology"/>
<sequence>MEVKDILKTVDHTLLATTATWPEIQTILDDAMAYETASACIPASYVKKAAEYVSGKLAICTVIGFPNGYSTTAAKVFECQDAIKNGADEIDMVINLTDVKNGDFDTVEEEIRQIKAACQDHILKVIVETCQLTKEELIELCGVVTRSGADFIKTSTGFSTAGATFEDVEVMAKYVGEGVKIKAAGGISSLEDAEKFIALGASRLGTSRIIKIVKNQKVEEGTY</sequence>